<keyword id="KW-0521">NADP</keyword>
<keyword id="KW-0560">Oxidoreductase</keyword>
<keyword id="KW-1185">Reference proteome</keyword>
<name>DHDH_DANRE</name>
<evidence type="ECO:0000250" key="1"/>
<evidence type="ECO:0000305" key="2"/>
<sequence>MALRWGICSAGKISHDFTVALRTLPAEQHQVVAVAARELAHAQEFAQKHSIPRAYGSYEELAEDPEIDVVYVGTIHPHHLRVGLLFMNAKKNVLCEKPLAMNLKEVQQMISAARRSDVFLMEAVWTRFFPASLEISRLLSQNAVGQVKLVRADFGAALLGVPRAVQKHLGGGALLDIGIYCIQFVLMVFNGEKPEQIQASGVCLDTGVDEAMVVTLKFSGHRLAVCTCTVAAELPNEALIVGTEGTIKVPAHMWCPTSLLVNGVETQFPVPDPHLPLNFINSTGMRYEAEEVRRCVLAGLKESSRMSHADSALLADIMDEARRQVGVVYSQDSQ</sequence>
<gene>
    <name type="primary">dhdh</name>
    <name type="ORF">ch211-203b17.3</name>
    <name type="ORF">zgc:101723</name>
</gene>
<dbReference type="EC" id="1.3.1.20"/>
<dbReference type="EC" id="1.1.1.179"/>
<dbReference type="EMBL" id="BC081393">
    <property type="protein sequence ID" value="AAH81393.1"/>
    <property type="molecule type" value="mRNA"/>
</dbReference>
<dbReference type="EMBL" id="BX119923">
    <property type="protein sequence ID" value="CAP09380.1"/>
    <property type="status" value="ALT_INIT"/>
    <property type="molecule type" value="Genomic_DNA"/>
</dbReference>
<dbReference type="RefSeq" id="NP_001005600.1">
    <property type="nucleotide sequence ID" value="NM_001005600.1"/>
</dbReference>
<dbReference type="SMR" id="Q642M9"/>
<dbReference type="FunCoup" id="Q642M9">
    <property type="interactions" value="803"/>
</dbReference>
<dbReference type="STRING" id="7955.ENSDARP00000145153"/>
<dbReference type="PaxDb" id="7955-ENSDARP00000115782"/>
<dbReference type="Ensembl" id="ENSDART00000158547">
    <property type="protein sequence ID" value="ENSDARP00000141650"/>
    <property type="gene ID" value="ENSDARG00000019081"/>
</dbReference>
<dbReference type="GeneID" id="449558"/>
<dbReference type="KEGG" id="dre:449558"/>
<dbReference type="AGR" id="ZFIN:ZDB-GENE-040927-25"/>
<dbReference type="CTD" id="449558"/>
<dbReference type="ZFIN" id="ZDB-GENE-040927-25">
    <property type="gene designation" value="dhdh.2"/>
</dbReference>
<dbReference type="eggNOG" id="KOG2741">
    <property type="taxonomic scope" value="Eukaryota"/>
</dbReference>
<dbReference type="InParanoid" id="Q642M9"/>
<dbReference type="OMA" id="AHETGKY"/>
<dbReference type="OrthoDB" id="2129491at2759"/>
<dbReference type="PhylomeDB" id="Q642M9"/>
<dbReference type="PRO" id="PR:Q642M9"/>
<dbReference type="Proteomes" id="UP000000437">
    <property type="component" value="Chromosome 18"/>
</dbReference>
<dbReference type="Bgee" id="ENSDARG00000019081">
    <property type="expression patterns" value="Expressed in muscle tissue and 27 other cell types or tissues"/>
</dbReference>
<dbReference type="ExpressionAtlas" id="Q642M9">
    <property type="expression patterns" value="baseline and differential"/>
</dbReference>
<dbReference type="GO" id="GO:0047837">
    <property type="term" value="F:D-xylose 1-dehydrogenase (NADP+) activity"/>
    <property type="evidence" value="ECO:0007669"/>
    <property type="project" value="UniProtKB-EC"/>
</dbReference>
<dbReference type="GO" id="GO:0000166">
    <property type="term" value="F:nucleotide binding"/>
    <property type="evidence" value="ECO:0007669"/>
    <property type="project" value="InterPro"/>
</dbReference>
<dbReference type="GO" id="GO:0047115">
    <property type="term" value="F:trans-1,2-dihydrobenzene-1,2-diol dehydrogenase activity"/>
    <property type="evidence" value="ECO:0007669"/>
    <property type="project" value="UniProtKB-EC"/>
</dbReference>
<dbReference type="FunFam" id="3.40.50.720:FF:000269">
    <property type="entry name" value="Trans-1,2-dihydrobenzene-1,2-diol dehydrogenase"/>
    <property type="match status" value="1"/>
</dbReference>
<dbReference type="Gene3D" id="3.30.360.10">
    <property type="entry name" value="Dihydrodipicolinate Reductase, domain 2"/>
    <property type="match status" value="1"/>
</dbReference>
<dbReference type="Gene3D" id="3.40.50.720">
    <property type="entry name" value="NAD(P)-binding Rossmann-like Domain"/>
    <property type="match status" value="1"/>
</dbReference>
<dbReference type="InterPro" id="IPR000683">
    <property type="entry name" value="Gfo/Idh/MocA-like_OxRdtase_N"/>
</dbReference>
<dbReference type="InterPro" id="IPR050984">
    <property type="entry name" value="Gfo/Idh/MocA_domain"/>
</dbReference>
<dbReference type="InterPro" id="IPR055170">
    <property type="entry name" value="GFO_IDH_MocA-like_dom"/>
</dbReference>
<dbReference type="InterPro" id="IPR036291">
    <property type="entry name" value="NAD(P)-bd_dom_sf"/>
</dbReference>
<dbReference type="PANTHER" id="PTHR22604">
    <property type="entry name" value="OXIDOREDUCTASES"/>
    <property type="match status" value="1"/>
</dbReference>
<dbReference type="PANTHER" id="PTHR22604:SF105">
    <property type="entry name" value="TRANS-1,2-DIHYDROBENZENE-1,2-DIOL DEHYDROGENASE"/>
    <property type="match status" value="1"/>
</dbReference>
<dbReference type="Pfam" id="PF01408">
    <property type="entry name" value="GFO_IDH_MocA"/>
    <property type="match status" value="1"/>
</dbReference>
<dbReference type="Pfam" id="PF22725">
    <property type="entry name" value="GFO_IDH_MocA_C3"/>
    <property type="match status" value="1"/>
</dbReference>
<dbReference type="SUPFAM" id="SSF55347">
    <property type="entry name" value="Glyceraldehyde-3-phosphate dehydrogenase-like, C-terminal domain"/>
    <property type="match status" value="1"/>
</dbReference>
<dbReference type="SUPFAM" id="SSF51735">
    <property type="entry name" value="NAD(P)-binding Rossmann-fold domains"/>
    <property type="match status" value="1"/>
</dbReference>
<comment type="catalytic activity">
    <reaction>
        <text>(1R,2R)-1,2-dihydrobenzene-1,2-diol + NADP(+) = catechol + NADPH + H(+)</text>
        <dbReference type="Rhea" id="RHEA:16729"/>
        <dbReference type="ChEBI" id="CHEBI:10702"/>
        <dbReference type="ChEBI" id="CHEBI:15378"/>
        <dbReference type="ChEBI" id="CHEBI:18135"/>
        <dbReference type="ChEBI" id="CHEBI:57783"/>
        <dbReference type="ChEBI" id="CHEBI:58349"/>
        <dbReference type="EC" id="1.3.1.20"/>
    </reaction>
</comment>
<comment type="catalytic activity">
    <reaction>
        <text>D-xylose + NADP(+) = D-xylono-1,5-lactone + NADPH + H(+)</text>
        <dbReference type="Rhea" id="RHEA:22000"/>
        <dbReference type="ChEBI" id="CHEBI:15378"/>
        <dbReference type="ChEBI" id="CHEBI:15867"/>
        <dbReference type="ChEBI" id="CHEBI:53455"/>
        <dbReference type="ChEBI" id="CHEBI:57783"/>
        <dbReference type="ChEBI" id="CHEBI:58349"/>
        <dbReference type="EC" id="1.1.1.179"/>
    </reaction>
</comment>
<comment type="subunit">
    <text evidence="1">Homodimer.</text>
</comment>
<comment type="similarity">
    <text evidence="2">Belongs to the Gfo/Idh/MocA family.</text>
</comment>
<comment type="sequence caution" evidence="2">
    <conflict type="erroneous initiation">
        <sequence resource="EMBL-CDS" id="CAP09380"/>
    </conflict>
</comment>
<proteinExistence type="evidence at transcript level"/>
<accession>Q642M9</accession>
<accession>A8E7G1</accession>
<organism>
    <name type="scientific">Danio rerio</name>
    <name type="common">Zebrafish</name>
    <name type="synonym">Brachydanio rerio</name>
    <dbReference type="NCBI Taxonomy" id="7955"/>
    <lineage>
        <taxon>Eukaryota</taxon>
        <taxon>Metazoa</taxon>
        <taxon>Chordata</taxon>
        <taxon>Craniata</taxon>
        <taxon>Vertebrata</taxon>
        <taxon>Euteleostomi</taxon>
        <taxon>Actinopterygii</taxon>
        <taxon>Neopterygii</taxon>
        <taxon>Teleostei</taxon>
        <taxon>Ostariophysi</taxon>
        <taxon>Cypriniformes</taxon>
        <taxon>Danionidae</taxon>
        <taxon>Danioninae</taxon>
        <taxon>Danio</taxon>
    </lineage>
</organism>
<reference key="1">
    <citation type="submission" date="2004-09" db="EMBL/GenBank/DDBJ databases">
        <authorList>
            <consortium name="NIH - Zebrafish Gene Collection (ZGC) project"/>
        </authorList>
    </citation>
    <scope>NUCLEOTIDE SEQUENCE [LARGE SCALE MRNA]</scope>
    <source>
        <tissue>Olfactory epithelium</tissue>
    </source>
</reference>
<reference key="2">
    <citation type="journal article" date="2013" name="Nature">
        <title>The zebrafish reference genome sequence and its relationship to the human genome.</title>
        <authorList>
            <person name="Howe K."/>
            <person name="Clark M.D."/>
            <person name="Torroja C.F."/>
            <person name="Torrance J."/>
            <person name="Berthelot C."/>
            <person name="Muffato M."/>
            <person name="Collins J.E."/>
            <person name="Humphray S."/>
            <person name="McLaren K."/>
            <person name="Matthews L."/>
            <person name="McLaren S."/>
            <person name="Sealy I."/>
            <person name="Caccamo M."/>
            <person name="Churcher C."/>
            <person name="Scott C."/>
            <person name="Barrett J.C."/>
            <person name="Koch R."/>
            <person name="Rauch G.J."/>
            <person name="White S."/>
            <person name="Chow W."/>
            <person name="Kilian B."/>
            <person name="Quintais L.T."/>
            <person name="Guerra-Assuncao J.A."/>
            <person name="Zhou Y."/>
            <person name="Gu Y."/>
            <person name="Yen J."/>
            <person name="Vogel J.H."/>
            <person name="Eyre T."/>
            <person name="Redmond S."/>
            <person name="Banerjee R."/>
            <person name="Chi J."/>
            <person name="Fu B."/>
            <person name="Langley E."/>
            <person name="Maguire S.F."/>
            <person name="Laird G.K."/>
            <person name="Lloyd D."/>
            <person name="Kenyon E."/>
            <person name="Donaldson S."/>
            <person name="Sehra H."/>
            <person name="Almeida-King J."/>
            <person name="Loveland J."/>
            <person name="Trevanion S."/>
            <person name="Jones M."/>
            <person name="Quail M."/>
            <person name="Willey D."/>
            <person name="Hunt A."/>
            <person name="Burton J."/>
            <person name="Sims S."/>
            <person name="McLay K."/>
            <person name="Plumb B."/>
            <person name="Davis J."/>
            <person name="Clee C."/>
            <person name="Oliver K."/>
            <person name="Clark R."/>
            <person name="Riddle C."/>
            <person name="Elliot D."/>
            <person name="Threadgold G."/>
            <person name="Harden G."/>
            <person name="Ware D."/>
            <person name="Begum S."/>
            <person name="Mortimore B."/>
            <person name="Kerry G."/>
            <person name="Heath P."/>
            <person name="Phillimore B."/>
            <person name="Tracey A."/>
            <person name="Corby N."/>
            <person name="Dunn M."/>
            <person name="Johnson C."/>
            <person name="Wood J."/>
            <person name="Clark S."/>
            <person name="Pelan S."/>
            <person name="Griffiths G."/>
            <person name="Smith M."/>
            <person name="Glithero R."/>
            <person name="Howden P."/>
            <person name="Barker N."/>
            <person name="Lloyd C."/>
            <person name="Stevens C."/>
            <person name="Harley J."/>
            <person name="Holt K."/>
            <person name="Panagiotidis G."/>
            <person name="Lovell J."/>
            <person name="Beasley H."/>
            <person name="Henderson C."/>
            <person name="Gordon D."/>
            <person name="Auger K."/>
            <person name="Wright D."/>
            <person name="Collins J."/>
            <person name="Raisen C."/>
            <person name="Dyer L."/>
            <person name="Leung K."/>
            <person name="Robertson L."/>
            <person name="Ambridge K."/>
            <person name="Leongamornlert D."/>
            <person name="McGuire S."/>
            <person name="Gilderthorp R."/>
            <person name="Griffiths C."/>
            <person name="Manthravadi D."/>
            <person name="Nichol S."/>
            <person name="Barker G."/>
            <person name="Whitehead S."/>
            <person name="Kay M."/>
            <person name="Brown J."/>
            <person name="Murnane C."/>
            <person name="Gray E."/>
            <person name="Humphries M."/>
            <person name="Sycamore N."/>
            <person name="Barker D."/>
            <person name="Saunders D."/>
            <person name="Wallis J."/>
            <person name="Babbage A."/>
            <person name="Hammond S."/>
            <person name="Mashreghi-Mohammadi M."/>
            <person name="Barr L."/>
            <person name="Martin S."/>
            <person name="Wray P."/>
            <person name="Ellington A."/>
            <person name="Matthews N."/>
            <person name="Ellwood M."/>
            <person name="Woodmansey R."/>
            <person name="Clark G."/>
            <person name="Cooper J."/>
            <person name="Tromans A."/>
            <person name="Grafham D."/>
            <person name="Skuce C."/>
            <person name="Pandian R."/>
            <person name="Andrews R."/>
            <person name="Harrison E."/>
            <person name="Kimberley A."/>
            <person name="Garnett J."/>
            <person name="Fosker N."/>
            <person name="Hall R."/>
            <person name="Garner P."/>
            <person name="Kelly D."/>
            <person name="Bird C."/>
            <person name="Palmer S."/>
            <person name="Gehring I."/>
            <person name="Berger A."/>
            <person name="Dooley C.M."/>
            <person name="Ersan-Urun Z."/>
            <person name="Eser C."/>
            <person name="Geiger H."/>
            <person name="Geisler M."/>
            <person name="Karotki L."/>
            <person name="Kirn A."/>
            <person name="Konantz J."/>
            <person name="Konantz M."/>
            <person name="Oberlander M."/>
            <person name="Rudolph-Geiger S."/>
            <person name="Teucke M."/>
            <person name="Lanz C."/>
            <person name="Raddatz G."/>
            <person name="Osoegawa K."/>
            <person name="Zhu B."/>
            <person name="Rapp A."/>
            <person name="Widaa S."/>
            <person name="Langford C."/>
            <person name="Yang F."/>
            <person name="Schuster S.C."/>
            <person name="Carter N.P."/>
            <person name="Harrow J."/>
            <person name="Ning Z."/>
            <person name="Herrero J."/>
            <person name="Searle S.M."/>
            <person name="Enright A."/>
            <person name="Geisler R."/>
            <person name="Plasterk R.H."/>
            <person name="Lee C."/>
            <person name="Westerfield M."/>
            <person name="de Jong P.J."/>
            <person name="Zon L.I."/>
            <person name="Postlethwait J.H."/>
            <person name="Nusslein-Volhard C."/>
            <person name="Hubbard T.J."/>
            <person name="Roest Crollius H."/>
            <person name="Rogers J."/>
            <person name="Stemple D.L."/>
        </authorList>
    </citation>
    <scope>NUCLEOTIDE SEQUENCE [LARGE SCALE GENOMIC DNA] OF 1-299</scope>
    <source>
        <strain>Tuebingen</strain>
    </source>
</reference>
<protein>
    <recommendedName>
        <fullName>Trans-1,2-dihydrobenzene-1,2-diol dehydrogenase</fullName>
        <ecNumber>1.3.1.20</ecNumber>
    </recommendedName>
    <alternativeName>
        <fullName>D-xylose 1-dehydrogenase</fullName>
    </alternativeName>
    <alternativeName>
        <fullName>D-xylose-NADP dehydrogenase</fullName>
        <ecNumber>1.1.1.179</ecNumber>
    </alternativeName>
    <alternativeName>
        <fullName>Dimeric dihydrodiol dehydrogenase</fullName>
    </alternativeName>
</protein>
<feature type="chain" id="PRO_0000315368" description="Trans-1,2-dihydrobenzene-1,2-diol dehydrogenase">
    <location>
        <begin position="1"/>
        <end position="334"/>
    </location>
</feature>
<feature type="site" description="May play an important role in coenzyme binding" evidence="1">
    <location>
        <position position="71"/>
    </location>
</feature>
<feature type="site" description="May play an important role in coenzyme binding" evidence="1">
    <location>
        <position position="79"/>
    </location>
</feature>
<feature type="site" description="May play an important role in coenzyme binding" evidence="1">
    <location>
        <position position="97"/>
    </location>
</feature>
<feature type="site" description="May play an important role for the adaptation of the alcohol substrate into the binding site" evidence="1">
    <location>
        <position position="176"/>
    </location>
</feature>
<feature type="site" description="May play an important role in catalytic activity" evidence="1">
    <location>
        <position position="180"/>
    </location>
</feature>
<feature type="sequence conflict" description="In Ref. 1; AAH81393." evidence="2" ref="1">
    <original>P</original>
    <variation>Q</variation>
    <location>
        <position position="25"/>
    </location>
</feature>
<feature type="sequence conflict" description="In Ref. 1; AAH81393." evidence="2" ref="1">
    <original>G</original>
    <variation>A</variation>
    <location>
        <position position="245"/>
    </location>
</feature>
<feature type="sequence conflict" description="In Ref. 1; AAH81393." evidence="2" ref="1">
    <original>S</original>
    <variation>T</variation>
    <location>
        <position position="258"/>
    </location>
</feature>